<evidence type="ECO:0000250" key="1"/>
<evidence type="ECO:0000255" key="2"/>
<evidence type="ECO:0000269" key="3">
    <source>
    </source>
</evidence>
<evidence type="ECO:0000305" key="4"/>
<protein>
    <recommendedName>
        <fullName>PRA1 family protein A1</fullName>
        <shortName>AtPRA1.A1</shortName>
    </recommendedName>
</protein>
<gene>
    <name type="primary">PRA1A1</name>
    <name type="ordered locus">At5g02040</name>
    <name type="ORF">T7H20.90</name>
</gene>
<name>PR1A1_ARATH</name>
<dbReference type="EMBL" id="AL162508">
    <property type="protein sequence ID" value="CAB82977.1"/>
    <property type="molecule type" value="Genomic_DNA"/>
</dbReference>
<dbReference type="EMBL" id="CP002688">
    <property type="protein sequence ID" value="AED90424.1"/>
    <property type="molecule type" value="Genomic_DNA"/>
</dbReference>
<dbReference type="EMBL" id="CP002688">
    <property type="protein sequence ID" value="AED90425.1"/>
    <property type="molecule type" value="Genomic_DNA"/>
</dbReference>
<dbReference type="EMBL" id="AY045975">
    <property type="protein sequence ID" value="AAK76649.1"/>
    <property type="molecule type" value="mRNA"/>
</dbReference>
<dbReference type="EMBL" id="AY054290">
    <property type="protein sequence ID" value="AAL06948.1"/>
    <property type="status" value="ALT_FRAME"/>
    <property type="molecule type" value="mRNA"/>
</dbReference>
<dbReference type="EMBL" id="AY079325">
    <property type="protein sequence ID" value="AAL85056.1"/>
    <property type="molecule type" value="mRNA"/>
</dbReference>
<dbReference type="EMBL" id="AY085842">
    <property type="protein sequence ID" value="AAM63057.1"/>
    <property type="molecule type" value="mRNA"/>
</dbReference>
<dbReference type="PIR" id="T48225">
    <property type="entry name" value="T48225"/>
</dbReference>
<dbReference type="BioGRID" id="17180">
    <property type="interactions" value="9"/>
</dbReference>
<dbReference type="FunCoup" id="Q9LZM7">
    <property type="interactions" value="2588"/>
</dbReference>
<dbReference type="IntAct" id="Q9LZM7">
    <property type="interactions" value="10"/>
</dbReference>
<dbReference type="STRING" id="3702.Q9LZM7"/>
<dbReference type="PaxDb" id="3702-AT5G02040.1"/>
<dbReference type="ProteomicsDB" id="234873"/>
<dbReference type="EnsemblPlants" id="AT5G02040.1">
    <property type="protein sequence ID" value="AT5G02040.1"/>
    <property type="gene ID" value="AT5G02040"/>
</dbReference>
<dbReference type="EnsemblPlants" id="AT5G02040.2">
    <property type="protein sequence ID" value="AT5G02040.2"/>
    <property type="gene ID" value="AT5G02040"/>
</dbReference>
<dbReference type="GeneID" id="831904"/>
<dbReference type="Gramene" id="AT5G02040.1">
    <property type="protein sequence ID" value="AT5G02040.1"/>
    <property type="gene ID" value="AT5G02040"/>
</dbReference>
<dbReference type="Gramene" id="AT5G02040.2">
    <property type="protein sequence ID" value="AT5G02040.2"/>
    <property type="gene ID" value="AT5G02040"/>
</dbReference>
<dbReference type="KEGG" id="ath:AT5G02040"/>
<dbReference type="Araport" id="AT5G02040"/>
<dbReference type="TAIR" id="AT5G02040">
    <property type="gene designation" value="PRA1.A1"/>
</dbReference>
<dbReference type="eggNOG" id="ENOG502QSIX">
    <property type="taxonomic scope" value="Eukaryota"/>
</dbReference>
<dbReference type="HOGENOM" id="CLU_078633_0_0_1"/>
<dbReference type="InParanoid" id="Q9LZM7"/>
<dbReference type="OMA" id="KMRPPTT"/>
<dbReference type="OrthoDB" id="537033at2759"/>
<dbReference type="PhylomeDB" id="Q9LZM7"/>
<dbReference type="PRO" id="PR:Q9LZM7"/>
<dbReference type="Proteomes" id="UP000006548">
    <property type="component" value="Chromosome 5"/>
</dbReference>
<dbReference type="ExpressionAtlas" id="Q9LZM7">
    <property type="expression patterns" value="baseline and differential"/>
</dbReference>
<dbReference type="GO" id="GO:0005783">
    <property type="term" value="C:endoplasmic reticulum"/>
    <property type="evidence" value="ECO:0000314"/>
    <property type="project" value="TAIR"/>
</dbReference>
<dbReference type="GO" id="GO:0005789">
    <property type="term" value="C:endoplasmic reticulum membrane"/>
    <property type="evidence" value="ECO:0007669"/>
    <property type="project" value="UniProtKB-SubCell"/>
</dbReference>
<dbReference type="GO" id="GO:0016192">
    <property type="term" value="P:vesicle-mediated transport"/>
    <property type="evidence" value="ECO:0000314"/>
    <property type="project" value="TAIR"/>
</dbReference>
<dbReference type="InterPro" id="IPR004895">
    <property type="entry name" value="Prenylated_rab_accept_PRA1"/>
</dbReference>
<dbReference type="PANTHER" id="PTHR12859:SF0">
    <property type="entry name" value="PRA1 FAMILY PROTEIN"/>
    <property type="match status" value="1"/>
</dbReference>
<dbReference type="PANTHER" id="PTHR12859">
    <property type="entry name" value="PRA1 PROTEIN"/>
    <property type="match status" value="1"/>
</dbReference>
<dbReference type="Pfam" id="PF03208">
    <property type="entry name" value="PRA1"/>
    <property type="match status" value="1"/>
</dbReference>
<reference key="1">
    <citation type="journal article" date="2000" name="Nature">
        <title>Sequence and analysis of chromosome 5 of the plant Arabidopsis thaliana.</title>
        <authorList>
            <person name="Tabata S."/>
            <person name="Kaneko T."/>
            <person name="Nakamura Y."/>
            <person name="Kotani H."/>
            <person name="Kato T."/>
            <person name="Asamizu E."/>
            <person name="Miyajima N."/>
            <person name="Sasamoto S."/>
            <person name="Kimura T."/>
            <person name="Hosouchi T."/>
            <person name="Kawashima K."/>
            <person name="Kohara M."/>
            <person name="Matsumoto M."/>
            <person name="Matsuno A."/>
            <person name="Muraki A."/>
            <person name="Nakayama S."/>
            <person name="Nakazaki N."/>
            <person name="Naruo K."/>
            <person name="Okumura S."/>
            <person name="Shinpo S."/>
            <person name="Takeuchi C."/>
            <person name="Wada T."/>
            <person name="Watanabe A."/>
            <person name="Yamada M."/>
            <person name="Yasuda M."/>
            <person name="Sato S."/>
            <person name="de la Bastide M."/>
            <person name="Huang E."/>
            <person name="Spiegel L."/>
            <person name="Gnoj L."/>
            <person name="O'Shaughnessy A."/>
            <person name="Preston R."/>
            <person name="Habermann K."/>
            <person name="Murray J."/>
            <person name="Johnson D."/>
            <person name="Rohlfing T."/>
            <person name="Nelson J."/>
            <person name="Stoneking T."/>
            <person name="Pepin K."/>
            <person name="Spieth J."/>
            <person name="Sekhon M."/>
            <person name="Armstrong J."/>
            <person name="Becker M."/>
            <person name="Belter E."/>
            <person name="Cordum H."/>
            <person name="Cordes M."/>
            <person name="Courtney L."/>
            <person name="Courtney W."/>
            <person name="Dante M."/>
            <person name="Du H."/>
            <person name="Edwards J."/>
            <person name="Fryman J."/>
            <person name="Haakensen B."/>
            <person name="Lamar E."/>
            <person name="Latreille P."/>
            <person name="Leonard S."/>
            <person name="Meyer R."/>
            <person name="Mulvaney E."/>
            <person name="Ozersky P."/>
            <person name="Riley A."/>
            <person name="Strowmatt C."/>
            <person name="Wagner-McPherson C."/>
            <person name="Wollam A."/>
            <person name="Yoakum M."/>
            <person name="Bell M."/>
            <person name="Dedhia N."/>
            <person name="Parnell L."/>
            <person name="Shah R."/>
            <person name="Rodriguez M."/>
            <person name="Hoon See L."/>
            <person name="Vil D."/>
            <person name="Baker J."/>
            <person name="Kirchoff K."/>
            <person name="Toth K."/>
            <person name="King L."/>
            <person name="Bahret A."/>
            <person name="Miller B."/>
            <person name="Marra M.A."/>
            <person name="Martienssen R."/>
            <person name="McCombie W.R."/>
            <person name="Wilson R.K."/>
            <person name="Murphy G."/>
            <person name="Bancroft I."/>
            <person name="Volckaert G."/>
            <person name="Wambutt R."/>
            <person name="Duesterhoeft A."/>
            <person name="Stiekema W."/>
            <person name="Pohl T."/>
            <person name="Entian K.-D."/>
            <person name="Terryn N."/>
            <person name="Hartley N."/>
            <person name="Bent E."/>
            <person name="Johnson S."/>
            <person name="Langham S.-A."/>
            <person name="McCullagh B."/>
            <person name="Robben J."/>
            <person name="Grymonprez B."/>
            <person name="Zimmermann W."/>
            <person name="Ramsperger U."/>
            <person name="Wedler H."/>
            <person name="Balke K."/>
            <person name="Wedler E."/>
            <person name="Peters S."/>
            <person name="van Staveren M."/>
            <person name="Dirkse W."/>
            <person name="Mooijman P."/>
            <person name="Klein Lankhorst R."/>
            <person name="Weitzenegger T."/>
            <person name="Bothe G."/>
            <person name="Rose M."/>
            <person name="Hauf J."/>
            <person name="Berneiser S."/>
            <person name="Hempel S."/>
            <person name="Feldpausch M."/>
            <person name="Lamberth S."/>
            <person name="Villarroel R."/>
            <person name="Gielen J."/>
            <person name="Ardiles W."/>
            <person name="Bents O."/>
            <person name="Lemcke K."/>
            <person name="Kolesov G."/>
            <person name="Mayer K.F.X."/>
            <person name="Rudd S."/>
            <person name="Schoof H."/>
            <person name="Schueller C."/>
            <person name="Zaccaria P."/>
            <person name="Mewes H.-W."/>
            <person name="Bevan M."/>
            <person name="Fransz P.F."/>
        </authorList>
    </citation>
    <scope>NUCLEOTIDE SEQUENCE [LARGE SCALE GENOMIC DNA]</scope>
    <source>
        <strain>cv. Columbia</strain>
    </source>
</reference>
<reference key="2">
    <citation type="journal article" date="2017" name="Plant J.">
        <title>Araport11: a complete reannotation of the Arabidopsis thaliana reference genome.</title>
        <authorList>
            <person name="Cheng C.Y."/>
            <person name="Krishnakumar V."/>
            <person name="Chan A.P."/>
            <person name="Thibaud-Nissen F."/>
            <person name="Schobel S."/>
            <person name="Town C.D."/>
        </authorList>
    </citation>
    <scope>GENOME REANNOTATION</scope>
    <source>
        <strain>cv. Columbia</strain>
    </source>
</reference>
<reference key="3">
    <citation type="journal article" date="2003" name="Science">
        <title>Empirical analysis of transcriptional activity in the Arabidopsis genome.</title>
        <authorList>
            <person name="Yamada K."/>
            <person name="Lim J."/>
            <person name="Dale J.M."/>
            <person name="Chen H."/>
            <person name="Shinn P."/>
            <person name="Palm C.J."/>
            <person name="Southwick A.M."/>
            <person name="Wu H.C."/>
            <person name="Kim C.J."/>
            <person name="Nguyen M."/>
            <person name="Pham P.K."/>
            <person name="Cheuk R.F."/>
            <person name="Karlin-Newmann G."/>
            <person name="Liu S.X."/>
            <person name="Lam B."/>
            <person name="Sakano H."/>
            <person name="Wu T."/>
            <person name="Yu G."/>
            <person name="Miranda M."/>
            <person name="Quach H.L."/>
            <person name="Tripp M."/>
            <person name="Chang C.H."/>
            <person name="Lee J.M."/>
            <person name="Toriumi M.J."/>
            <person name="Chan M.M."/>
            <person name="Tang C.C."/>
            <person name="Onodera C.S."/>
            <person name="Deng J.M."/>
            <person name="Akiyama K."/>
            <person name="Ansari Y."/>
            <person name="Arakawa T."/>
            <person name="Banh J."/>
            <person name="Banno F."/>
            <person name="Bowser L."/>
            <person name="Brooks S.Y."/>
            <person name="Carninci P."/>
            <person name="Chao Q."/>
            <person name="Choy N."/>
            <person name="Enju A."/>
            <person name="Goldsmith A.D."/>
            <person name="Gurjal M."/>
            <person name="Hansen N.F."/>
            <person name="Hayashizaki Y."/>
            <person name="Johnson-Hopson C."/>
            <person name="Hsuan V.W."/>
            <person name="Iida K."/>
            <person name="Karnes M."/>
            <person name="Khan S."/>
            <person name="Koesema E."/>
            <person name="Ishida J."/>
            <person name="Jiang P.X."/>
            <person name="Jones T."/>
            <person name="Kawai J."/>
            <person name="Kamiya A."/>
            <person name="Meyers C."/>
            <person name="Nakajima M."/>
            <person name="Narusaka M."/>
            <person name="Seki M."/>
            <person name="Sakurai T."/>
            <person name="Satou M."/>
            <person name="Tamse R."/>
            <person name="Vaysberg M."/>
            <person name="Wallender E.K."/>
            <person name="Wong C."/>
            <person name="Yamamura Y."/>
            <person name="Yuan S."/>
            <person name="Shinozaki K."/>
            <person name="Davis R.W."/>
            <person name="Theologis A."/>
            <person name="Ecker J.R."/>
        </authorList>
    </citation>
    <scope>NUCLEOTIDE SEQUENCE [LARGE SCALE MRNA]</scope>
    <source>
        <strain>cv. Columbia</strain>
    </source>
</reference>
<reference key="4">
    <citation type="submission" date="2002-03" db="EMBL/GenBank/DDBJ databases">
        <title>Full-length cDNA from Arabidopsis thaliana.</title>
        <authorList>
            <person name="Brover V.V."/>
            <person name="Troukhan M.E."/>
            <person name="Alexandrov N.A."/>
            <person name="Lu Y.-P."/>
            <person name="Flavell R.B."/>
            <person name="Feldmann K.A."/>
        </authorList>
    </citation>
    <scope>NUCLEOTIDE SEQUENCE [LARGE SCALE MRNA]</scope>
</reference>
<reference key="5">
    <citation type="journal article" date="2008" name="Plant Physiol.">
        <title>The PRA1 gene family in Arabidopsis.</title>
        <authorList>
            <person name="Alvim Kamei C.L."/>
            <person name="Boruc J."/>
            <person name="Vandepoele K."/>
            <person name="Van den Daele H."/>
            <person name="Maes S."/>
            <person name="Russinova E."/>
            <person name="Inze D."/>
            <person name="de Veylder L."/>
        </authorList>
    </citation>
    <scope>SUBCELLULAR LOCATION</scope>
    <scope>GENE FAMILY</scope>
    <scope>NOMENCLATURE</scope>
</reference>
<proteinExistence type="evidence at transcript level"/>
<comment type="function">
    <text evidence="1">May be involved in both secretory and endocytic intracellular trafficking in the endosomal/prevacuolar compartments.</text>
</comment>
<comment type="subcellular location">
    <subcellularLocation>
        <location evidence="3">Endoplasmic reticulum membrane</location>
        <topology evidence="3">Multi-pass membrane protein</topology>
    </subcellularLocation>
</comment>
<comment type="similarity">
    <text evidence="4">Belongs to the PRA1 family.</text>
</comment>
<comment type="sequence caution" evidence="4">
    <conflict type="frameshift">
        <sequence resource="EMBL-CDS" id="AAL06948"/>
    </conflict>
</comment>
<feature type="chain" id="PRO_0000352247" description="PRA1 family protein A1">
    <location>
        <begin position="1"/>
        <end position="209"/>
    </location>
</feature>
<feature type="transmembrane region" description="Helical" evidence="2">
    <location>
        <begin position="51"/>
        <end position="73"/>
    </location>
</feature>
<feature type="transmembrane region" description="Helical" evidence="2">
    <location>
        <begin position="77"/>
        <end position="99"/>
    </location>
</feature>
<feature type="transmembrane region" description="Helical" evidence="2">
    <location>
        <begin position="144"/>
        <end position="164"/>
    </location>
</feature>
<feature type="transmembrane region" description="Helical" evidence="2">
    <location>
        <begin position="166"/>
        <end position="186"/>
    </location>
</feature>
<feature type="sequence conflict" description="In Ref. 4; AAM63057." evidence="4" ref="4">
    <original>R</original>
    <variation>I</variation>
    <location>
        <position position="107"/>
    </location>
</feature>
<organism>
    <name type="scientific">Arabidopsis thaliana</name>
    <name type="common">Mouse-ear cress</name>
    <dbReference type="NCBI Taxonomy" id="3702"/>
    <lineage>
        <taxon>Eukaryota</taxon>
        <taxon>Viridiplantae</taxon>
        <taxon>Streptophyta</taxon>
        <taxon>Embryophyta</taxon>
        <taxon>Tracheophyta</taxon>
        <taxon>Spermatophyta</taxon>
        <taxon>Magnoliopsida</taxon>
        <taxon>eudicotyledons</taxon>
        <taxon>Gunneridae</taxon>
        <taxon>Pentapetalae</taxon>
        <taxon>rosids</taxon>
        <taxon>malvids</taxon>
        <taxon>Brassicales</taxon>
        <taxon>Brassicaceae</taxon>
        <taxon>Camelineae</taxon>
        <taxon>Arabidopsis</taxon>
    </lineage>
</organism>
<accession>Q9LZM7</accession>
<accession>Q8LDR7</accession>
<accession>Q940L1</accession>
<sequence length="209" mass="23833">MDWGNVTVDDLFDALREVDWSSPPRPPSEFFSRFTVPKSVPKWDSRLKCNLYYYRTNYFIMIVVILGLGVLTRPLAIFAALLTALSLAFLNDSFAGSFSEKATRTVRRFSPQLAAKMRPPLTPVTRGRPSSKRAIHVCGQPRWVFVLTCSLVSFALWYISSGLLRVSVALLIAHLATILHASLRTPNLKARFNTFREEFRAVWRNYSEI</sequence>
<keyword id="KW-0256">Endoplasmic reticulum</keyword>
<keyword id="KW-0472">Membrane</keyword>
<keyword id="KW-1185">Reference proteome</keyword>
<keyword id="KW-0812">Transmembrane</keyword>
<keyword id="KW-1133">Transmembrane helix</keyword>
<keyword id="KW-0813">Transport</keyword>